<name>ILVD2_NOCFA</name>
<keyword id="KW-0001">2Fe-2S</keyword>
<keyword id="KW-0028">Amino-acid biosynthesis</keyword>
<keyword id="KW-0100">Branched-chain amino acid biosynthesis</keyword>
<keyword id="KW-0408">Iron</keyword>
<keyword id="KW-0411">Iron-sulfur</keyword>
<keyword id="KW-0456">Lyase</keyword>
<keyword id="KW-0460">Magnesium</keyword>
<keyword id="KW-0479">Metal-binding</keyword>
<keyword id="KW-1185">Reference proteome</keyword>
<comment type="function">
    <text evidence="1">Functions in the biosynthesis of branched-chain amino acids. Catalyzes the dehydration of (2R,3R)-2,3-dihydroxy-3-methylpentanoate (2,3-dihydroxy-3-methylvalerate) into 2-oxo-3-methylpentanoate (2-oxo-3-methylvalerate) and of (2R)-2,3-dihydroxy-3-methylbutanoate (2,3-dihydroxyisovalerate) into 2-oxo-3-methylbutanoate (2-oxoisovalerate), the penultimate precursor to L-isoleucine and L-valine, respectively.</text>
</comment>
<comment type="catalytic activity">
    <reaction evidence="1">
        <text>(2R)-2,3-dihydroxy-3-methylbutanoate = 3-methyl-2-oxobutanoate + H2O</text>
        <dbReference type="Rhea" id="RHEA:24809"/>
        <dbReference type="ChEBI" id="CHEBI:11851"/>
        <dbReference type="ChEBI" id="CHEBI:15377"/>
        <dbReference type="ChEBI" id="CHEBI:49072"/>
        <dbReference type="EC" id="4.2.1.9"/>
    </reaction>
    <physiologicalReaction direction="left-to-right" evidence="1">
        <dbReference type="Rhea" id="RHEA:24810"/>
    </physiologicalReaction>
</comment>
<comment type="catalytic activity">
    <reaction evidence="1">
        <text>(2R,3R)-2,3-dihydroxy-3-methylpentanoate = (S)-3-methyl-2-oxopentanoate + H2O</text>
        <dbReference type="Rhea" id="RHEA:27694"/>
        <dbReference type="ChEBI" id="CHEBI:15377"/>
        <dbReference type="ChEBI" id="CHEBI:35146"/>
        <dbReference type="ChEBI" id="CHEBI:49258"/>
        <dbReference type="EC" id="4.2.1.9"/>
    </reaction>
    <physiologicalReaction direction="left-to-right" evidence="1">
        <dbReference type="Rhea" id="RHEA:27695"/>
    </physiologicalReaction>
</comment>
<comment type="cofactor">
    <cofactor evidence="1">
        <name>[2Fe-2S] cluster</name>
        <dbReference type="ChEBI" id="CHEBI:190135"/>
    </cofactor>
    <text evidence="1">Binds 1 [2Fe-2S] cluster per subunit. This cluster acts as a Lewis acid cofactor.</text>
</comment>
<comment type="cofactor">
    <cofactor evidence="1">
        <name>Mg(2+)</name>
        <dbReference type="ChEBI" id="CHEBI:18420"/>
    </cofactor>
</comment>
<comment type="pathway">
    <text evidence="1">Amino-acid biosynthesis; L-isoleucine biosynthesis; L-isoleucine from 2-oxobutanoate: step 3/4.</text>
</comment>
<comment type="pathway">
    <text evidence="1">Amino-acid biosynthesis; L-valine biosynthesis; L-valine from pyruvate: step 3/4.</text>
</comment>
<comment type="subunit">
    <text evidence="1">Homodimer.</text>
</comment>
<comment type="similarity">
    <text evidence="1">Belongs to the IlvD/Edd family.</text>
</comment>
<feature type="chain" id="PRO_0000225402" description="Dihydroxy-acid dehydratase 2">
    <location>
        <begin position="1"/>
        <end position="629"/>
    </location>
</feature>
<feature type="region of interest" description="Disordered" evidence="2">
    <location>
        <begin position="603"/>
        <end position="629"/>
    </location>
</feature>
<feature type="active site" description="Proton acceptor" evidence="1">
    <location>
        <position position="519"/>
    </location>
</feature>
<feature type="binding site" evidence="1">
    <location>
        <position position="82"/>
    </location>
    <ligand>
        <name>Mg(2+)</name>
        <dbReference type="ChEBI" id="CHEBI:18420"/>
    </ligand>
</feature>
<feature type="binding site" evidence="1">
    <location>
        <position position="123"/>
    </location>
    <ligand>
        <name>[2Fe-2S] cluster</name>
        <dbReference type="ChEBI" id="CHEBI:190135"/>
    </ligand>
</feature>
<feature type="binding site" evidence="1">
    <location>
        <position position="124"/>
    </location>
    <ligand>
        <name>Mg(2+)</name>
        <dbReference type="ChEBI" id="CHEBI:18420"/>
    </ligand>
</feature>
<feature type="binding site" description="via carbamate group" evidence="1">
    <location>
        <position position="125"/>
    </location>
    <ligand>
        <name>Mg(2+)</name>
        <dbReference type="ChEBI" id="CHEBI:18420"/>
    </ligand>
</feature>
<feature type="binding site" evidence="1">
    <location>
        <position position="197"/>
    </location>
    <ligand>
        <name>[2Fe-2S] cluster</name>
        <dbReference type="ChEBI" id="CHEBI:190135"/>
    </ligand>
</feature>
<feature type="binding site" evidence="1">
    <location>
        <position position="493"/>
    </location>
    <ligand>
        <name>Mg(2+)</name>
        <dbReference type="ChEBI" id="CHEBI:18420"/>
    </ligand>
</feature>
<feature type="modified residue" description="N6-carboxylysine" evidence="1">
    <location>
        <position position="125"/>
    </location>
</feature>
<sequence>MPELRSRTVTHGRNMAGARALMRASGVPAADIGAKPVVAVANSFTEFVPGHTHLQPVGRIVGDAIRRAGGIPREFNTIAVDDGIAMGHQGMLYSLPSRDLIADSIEYMVQAHCADALVCISNCDKITPGMLLAAMRLDIPTVFVSGGPMEGGRATLADGTVRRLDLITAMSEAVNDATSDADLATIEENACPTCGSCAGMFTANSMNCLVEALGLALPGNGTTLATHTARRDLYEAAGATIMAITRRYYDRDDATVLPRAIASRAAFDNAMALDLAMGGSTNTVLHLLAAAHEAGLDYTLADIEKRSRAVPCLCKVAPNGSHLMEDVHRAGGIPAILGELRRGGHLHTTVRAVHSESLDGWLAEWDVRGPNPAQAAVDLFHAAPGGVRSATAFSQSARWAALDLDAESGCIRDVAHAYSEDGGLAVLRGNLAVDGAVVKSAGVPADLHVFTGEAVVAESQEEAVTAVLSGRVRPGTVLVIRYEGPRGGPGMQEMLYPTAYLKGRGLAGSVAVVTDGRFSGGSSGLSIGHVSPEAAAGGTIAAVTDGDPITIDIPSRTLRLEVDDAEIARRLAHRRRTGYRPRSRHRPLSTALRAYALLAQSADKGGVRRLPPDELGGPEAAFDTQTRAG</sequence>
<proteinExistence type="inferred from homology"/>
<dbReference type="EC" id="4.2.1.9" evidence="1"/>
<dbReference type="EMBL" id="AP006618">
    <property type="protein sequence ID" value="BAD57230.1"/>
    <property type="molecule type" value="Genomic_DNA"/>
</dbReference>
<dbReference type="RefSeq" id="WP_011208915.1">
    <property type="nucleotide sequence ID" value="NC_006361.1"/>
</dbReference>
<dbReference type="SMR" id="Q5YX61"/>
<dbReference type="STRING" id="247156.NFA_23830"/>
<dbReference type="GeneID" id="61133134"/>
<dbReference type="KEGG" id="nfa:NFA_23830"/>
<dbReference type="eggNOG" id="COG0129">
    <property type="taxonomic scope" value="Bacteria"/>
</dbReference>
<dbReference type="HOGENOM" id="CLU_014271_4_3_11"/>
<dbReference type="OrthoDB" id="9807077at2"/>
<dbReference type="UniPathway" id="UPA00047">
    <property type="reaction ID" value="UER00057"/>
</dbReference>
<dbReference type="UniPathway" id="UPA00049">
    <property type="reaction ID" value="UER00061"/>
</dbReference>
<dbReference type="Proteomes" id="UP000006820">
    <property type="component" value="Chromosome"/>
</dbReference>
<dbReference type="GO" id="GO:0005829">
    <property type="term" value="C:cytosol"/>
    <property type="evidence" value="ECO:0007669"/>
    <property type="project" value="TreeGrafter"/>
</dbReference>
<dbReference type="GO" id="GO:0051537">
    <property type="term" value="F:2 iron, 2 sulfur cluster binding"/>
    <property type="evidence" value="ECO:0007669"/>
    <property type="project" value="UniProtKB-UniRule"/>
</dbReference>
<dbReference type="GO" id="GO:0004160">
    <property type="term" value="F:dihydroxy-acid dehydratase activity"/>
    <property type="evidence" value="ECO:0007669"/>
    <property type="project" value="UniProtKB-UniRule"/>
</dbReference>
<dbReference type="GO" id="GO:0000287">
    <property type="term" value="F:magnesium ion binding"/>
    <property type="evidence" value="ECO:0007669"/>
    <property type="project" value="UniProtKB-UniRule"/>
</dbReference>
<dbReference type="GO" id="GO:0009097">
    <property type="term" value="P:isoleucine biosynthetic process"/>
    <property type="evidence" value="ECO:0007669"/>
    <property type="project" value="UniProtKB-UniRule"/>
</dbReference>
<dbReference type="GO" id="GO:0009099">
    <property type="term" value="P:L-valine biosynthetic process"/>
    <property type="evidence" value="ECO:0007669"/>
    <property type="project" value="UniProtKB-UniRule"/>
</dbReference>
<dbReference type="FunFam" id="3.50.30.80:FF:000001">
    <property type="entry name" value="Dihydroxy-acid dehydratase"/>
    <property type="match status" value="1"/>
</dbReference>
<dbReference type="Gene3D" id="3.50.30.80">
    <property type="entry name" value="IlvD/EDD C-terminal domain-like"/>
    <property type="match status" value="1"/>
</dbReference>
<dbReference type="HAMAP" id="MF_00012">
    <property type="entry name" value="IlvD"/>
    <property type="match status" value="1"/>
</dbReference>
<dbReference type="InterPro" id="IPR042096">
    <property type="entry name" value="Dihydro-acid_dehy_C"/>
</dbReference>
<dbReference type="InterPro" id="IPR004404">
    <property type="entry name" value="DihydroxyA_deHydtase"/>
</dbReference>
<dbReference type="InterPro" id="IPR020558">
    <property type="entry name" value="DiOHA_6PGluconate_deHydtase_CS"/>
</dbReference>
<dbReference type="InterPro" id="IPR056740">
    <property type="entry name" value="ILV_EDD_C"/>
</dbReference>
<dbReference type="InterPro" id="IPR000581">
    <property type="entry name" value="ILV_EDD_N"/>
</dbReference>
<dbReference type="InterPro" id="IPR037237">
    <property type="entry name" value="IlvD/EDD_N"/>
</dbReference>
<dbReference type="NCBIfam" id="TIGR00110">
    <property type="entry name" value="ilvD"/>
    <property type="match status" value="1"/>
</dbReference>
<dbReference type="NCBIfam" id="NF009103">
    <property type="entry name" value="PRK12448.1"/>
    <property type="match status" value="1"/>
</dbReference>
<dbReference type="PANTHER" id="PTHR43661">
    <property type="entry name" value="D-XYLONATE DEHYDRATASE"/>
    <property type="match status" value="1"/>
</dbReference>
<dbReference type="PANTHER" id="PTHR43661:SF3">
    <property type="entry name" value="D-XYLONATE DEHYDRATASE YAGF-RELATED"/>
    <property type="match status" value="1"/>
</dbReference>
<dbReference type="Pfam" id="PF24877">
    <property type="entry name" value="ILV_EDD_C"/>
    <property type="match status" value="1"/>
</dbReference>
<dbReference type="Pfam" id="PF00920">
    <property type="entry name" value="ILVD_EDD_N"/>
    <property type="match status" value="1"/>
</dbReference>
<dbReference type="SUPFAM" id="SSF143975">
    <property type="entry name" value="IlvD/EDD N-terminal domain-like"/>
    <property type="match status" value="1"/>
</dbReference>
<dbReference type="SUPFAM" id="SSF52016">
    <property type="entry name" value="LeuD/IlvD-like"/>
    <property type="match status" value="1"/>
</dbReference>
<dbReference type="PROSITE" id="PS00886">
    <property type="entry name" value="ILVD_EDD_1"/>
    <property type="match status" value="1"/>
</dbReference>
<reference key="1">
    <citation type="journal article" date="2004" name="Proc. Natl. Acad. Sci. U.S.A.">
        <title>The complete genomic sequence of Nocardia farcinica IFM 10152.</title>
        <authorList>
            <person name="Ishikawa J."/>
            <person name="Yamashita A."/>
            <person name="Mikami Y."/>
            <person name="Hoshino Y."/>
            <person name="Kurita H."/>
            <person name="Hotta K."/>
            <person name="Shiba T."/>
            <person name="Hattori M."/>
        </authorList>
    </citation>
    <scope>NUCLEOTIDE SEQUENCE [LARGE SCALE GENOMIC DNA]</scope>
    <source>
        <strain>IFM 10152</strain>
    </source>
</reference>
<organism>
    <name type="scientific">Nocardia farcinica (strain IFM 10152)</name>
    <dbReference type="NCBI Taxonomy" id="247156"/>
    <lineage>
        <taxon>Bacteria</taxon>
        <taxon>Bacillati</taxon>
        <taxon>Actinomycetota</taxon>
        <taxon>Actinomycetes</taxon>
        <taxon>Mycobacteriales</taxon>
        <taxon>Nocardiaceae</taxon>
        <taxon>Nocardia</taxon>
    </lineage>
</organism>
<protein>
    <recommendedName>
        <fullName evidence="1">Dihydroxy-acid dehydratase 2</fullName>
        <shortName evidence="1">DAD 2</shortName>
        <ecNumber evidence="1">4.2.1.9</ecNumber>
    </recommendedName>
</protein>
<accession>Q5YX61</accession>
<evidence type="ECO:0000255" key="1">
    <source>
        <dbReference type="HAMAP-Rule" id="MF_00012"/>
    </source>
</evidence>
<evidence type="ECO:0000256" key="2">
    <source>
        <dbReference type="SAM" id="MobiDB-lite"/>
    </source>
</evidence>
<gene>
    <name evidence="1" type="primary">ilvD2</name>
    <name type="ordered locus">NFA_23830</name>
</gene>